<protein>
    <recommendedName>
        <fullName evidence="1">Small ribosomal subunit protein bS18c</fullName>
    </recommendedName>
    <alternativeName>
        <fullName evidence="2">30S ribosomal protein S18, chloroplastic</fullName>
    </alternativeName>
</protein>
<geneLocation type="chloroplast"/>
<reference key="1">
    <citation type="journal article" date="2006" name="BMC Biol.">
        <title>The complete chloroplast DNA sequence of the green alga Oltmannsiellopsis viridis reveals a distinctive quadripartite architecture in the chloroplast genome of early diverging ulvophytes.</title>
        <authorList>
            <person name="Pombert J.-F."/>
            <person name="Lemieux C."/>
            <person name="Turmel M."/>
        </authorList>
    </citation>
    <scope>NUCLEOTIDE SEQUENCE [LARGE SCALE GENOMIC DNA]</scope>
</reference>
<feature type="chain" id="PRO_0000276879" description="Small ribosomal subunit protein bS18c">
    <location>
        <begin position="1"/>
        <end position="78"/>
    </location>
</feature>
<sequence>MKNIKNSPKLQLKSTGTPFQGTVDYKNIALLRKYISTEGKILPRRITGLTAKQQRAVAKAIKNARMVGLLPFINLEGY</sequence>
<keyword id="KW-0150">Chloroplast</keyword>
<keyword id="KW-0934">Plastid</keyword>
<keyword id="KW-0687">Ribonucleoprotein</keyword>
<keyword id="KW-0689">Ribosomal protein</keyword>
<keyword id="KW-0694">RNA-binding</keyword>
<keyword id="KW-0699">rRNA-binding</keyword>
<accession>Q20EV2</accession>
<name>RR18_OLTVI</name>
<proteinExistence type="inferred from homology"/>
<organism>
    <name type="scientific">Oltmannsiellopsis viridis</name>
    <name type="common">Marine flagellate</name>
    <name type="synonym">Oltmannsiella viridis</name>
    <dbReference type="NCBI Taxonomy" id="51324"/>
    <lineage>
        <taxon>Eukaryota</taxon>
        <taxon>Viridiplantae</taxon>
        <taxon>Chlorophyta</taxon>
        <taxon>Ulvophyceae</taxon>
        <taxon>Oltmannsiellopsidales</taxon>
        <taxon>Oltmannsiellopsidaceae</taxon>
        <taxon>Oltmannsiellopsis</taxon>
    </lineage>
</organism>
<dbReference type="EMBL" id="DQ291132">
    <property type="protein sequence ID" value="ABB81961.1"/>
    <property type="molecule type" value="Genomic_DNA"/>
</dbReference>
<dbReference type="RefSeq" id="YP_635893.1">
    <property type="nucleotide sequence ID" value="NC_008099.1"/>
</dbReference>
<dbReference type="SMR" id="Q20EV2"/>
<dbReference type="GeneID" id="4100098"/>
<dbReference type="GO" id="GO:0009507">
    <property type="term" value="C:chloroplast"/>
    <property type="evidence" value="ECO:0007669"/>
    <property type="project" value="UniProtKB-SubCell"/>
</dbReference>
<dbReference type="GO" id="GO:0005763">
    <property type="term" value="C:mitochondrial small ribosomal subunit"/>
    <property type="evidence" value="ECO:0007669"/>
    <property type="project" value="TreeGrafter"/>
</dbReference>
<dbReference type="GO" id="GO:0070181">
    <property type="term" value="F:small ribosomal subunit rRNA binding"/>
    <property type="evidence" value="ECO:0007669"/>
    <property type="project" value="TreeGrafter"/>
</dbReference>
<dbReference type="GO" id="GO:0003735">
    <property type="term" value="F:structural constituent of ribosome"/>
    <property type="evidence" value="ECO:0007669"/>
    <property type="project" value="InterPro"/>
</dbReference>
<dbReference type="GO" id="GO:0006412">
    <property type="term" value="P:translation"/>
    <property type="evidence" value="ECO:0007669"/>
    <property type="project" value="UniProtKB-UniRule"/>
</dbReference>
<dbReference type="Gene3D" id="4.10.640.10">
    <property type="entry name" value="Ribosomal protein S18"/>
    <property type="match status" value="1"/>
</dbReference>
<dbReference type="HAMAP" id="MF_00270">
    <property type="entry name" value="Ribosomal_bS18"/>
    <property type="match status" value="1"/>
</dbReference>
<dbReference type="InterPro" id="IPR001648">
    <property type="entry name" value="Ribosomal_bS18"/>
</dbReference>
<dbReference type="InterPro" id="IPR036870">
    <property type="entry name" value="Ribosomal_bS18_sf"/>
</dbReference>
<dbReference type="NCBIfam" id="TIGR00165">
    <property type="entry name" value="S18"/>
    <property type="match status" value="1"/>
</dbReference>
<dbReference type="PANTHER" id="PTHR13479">
    <property type="entry name" value="30S RIBOSOMAL PROTEIN S18"/>
    <property type="match status" value="1"/>
</dbReference>
<dbReference type="PANTHER" id="PTHR13479:SF40">
    <property type="entry name" value="SMALL RIBOSOMAL SUBUNIT PROTEIN BS18M"/>
    <property type="match status" value="1"/>
</dbReference>
<dbReference type="Pfam" id="PF01084">
    <property type="entry name" value="Ribosomal_S18"/>
    <property type="match status" value="1"/>
</dbReference>
<dbReference type="PRINTS" id="PR00974">
    <property type="entry name" value="RIBOSOMALS18"/>
</dbReference>
<dbReference type="SUPFAM" id="SSF46911">
    <property type="entry name" value="Ribosomal protein S18"/>
    <property type="match status" value="1"/>
</dbReference>
<evidence type="ECO:0000255" key="1">
    <source>
        <dbReference type="HAMAP-Rule" id="MF_00270"/>
    </source>
</evidence>
<evidence type="ECO:0000305" key="2"/>
<gene>
    <name evidence="1" type="primary">rps18</name>
</gene>
<comment type="subunit">
    <text>Part of the 30S ribosomal subunit.</text>
</comment>
<comment type="subcellular location">
    <subcellularLocation>
        <location>Plastid</location>
        <location>Chloroplast</location>
    </subcellularLocation>
</comment>
<comment type="similarity">
    <text evidence="1">Belongs to the bacterial ribosomal protein bS18 family.</text>
</comment>